<protein>
    <recommendedName>
        <fullName>Cyclin-dependent kinase C-1</fullName>
        <shortName>CDKC;1</shortName>
        <ecNumber>2.7.11.22</ecNumber>
        <ecNumber>2.7.11.23</ecNumber>
    </recommendedName>
</protein>
<proteinExistence type="evidence at protein level"/>
<comment type="catalytic activity">
    <reaction>
        <text>L-seryl-[protein] + ATP = O-phospho-L-seryl-[protein] + ADP + H(+)</text>
        <dbReference type="Rhea" id="RHEA:17989"/>
        <dbReference type="Rhea" id="RHEA-COMP:9863"/>
        <dbReference type="Rhea" id="RHEA-COMP:11604"/>
        <dbReference type="ChEBI" id="CHEBI:15378"/>
        <dbReference type="ChEBI" id="CHEBI:29999"/>
        <dbReference type="ChEBI" id="CHEBI:30616"/>
        <dbReference type="ChEBI" id="CHEBI:83421"/>
        <dbReference type="ChEBI" id="CHEBI:456216"/>
        <dbReference type="EC" id="2.7.11.22"/>
    </reaction>
</comment>
<comment type="catalytic activity">
    <reaction>
        <text>L-threonyl-[protein] + ATP = O-phospho-L-threonyl-[protein] + ADP + H(+)</text>
        <dbReference type="Rhea" id="RHEA:46608"/>
        <dbReference type="Rhea" id="RHEA-COMP:11060"/>
        <dbReference type="Rhea" id="RHEA-COMP:11605"/>
        <dbReference type="ChEBI" id="CHEBI:15378"/>
        <dbReference type="ChEBI" id="CHEBI:30013"/>
        <dbReference type="ChEBI" id="CHEBI:30616"/>
        <dbReference type="ChEBI" id="CHEBI:61977"/>
        <dbReference type="ChEBI" id="CHEBI:456216"/>
        <dbReference type="EC" id="2.7.11.22"/>
    </reaction>
</comment>
<comment type="catalytic activity">
    <reaction>
        <text>[DNA-directed RNA polymerase] + ATP = phospho-[DNA-directed RNA polymerase] + ADP + H(+)</text>
        <dbReference type="Rhea" id="RHEA:10216"/>
        <dbReference type="Rhea" id="RHEA-COMP:11321"/>
        <dbReference type="Rhea" id="RHEA-COMP:11322"/>
        <dbReference type="ChEBI" id="CHEBI:15378"/>
        <dbReference type="ChEBI" id="CHEBI:30616"/>
        <dbReference type="ChEBI" id="CHEBI:43176"/>
        <dbReference type="ChEBI" id="CHEBI:68546"/>
        <dbReference type="ChEBI" id="CHEBI:456216"/>
        <dbReference type="EC" id="2.7.11.23"/>
    </reaction>
</comment>
<comment type="subunit">
    <text evidence="6">Interacts with CYCT1-3.</text>
</comment>
<comment type="interaction">
    <interactant intactId="EBI-2025736">
        <id>Q9LFT8</id>
    </interactant>
    <interactant intactId="EBI-2025764">
        <id>Q8LBC0</id>
        <label>CYCT1-3</label>
    </interactant>
    <organismsDiffer>false</organismsDiffer>
    <experiments>4</experiments>
</comment>
<comment type="interaction">
    <interactant intactId="EBI-2025736">
        <id>Q9LFT8</id>
    </interactant>
    <interactant intactId="EBI-2025869">
        <id>Q9LKA5</id>
        <label>MORF8</label>
    </interactant>
    <organismsDiffer>false</organismsDiffer>
    <experiments>2</experiments>
</comment>
<comment type="tissue specificity">
    <text evidence="6">Highly expressed in flowers. Expressed in seedlings, roots, rosettes and stems.</text>
</comment>
<comment type="similarity">
    <text evidence="7">Belongs to the protein kinase superfamily. CMGC Ser/Thr protein kinase family. CDC2/CDKX subfamily.</text>
</comment>
<organism>
    <name type="scientific">Arabidopsis thaliana</name>
    <name type="common">Mouse-ear cress</name>
    <dbReference type="NCBI Taxonomy" id="3702"/>
    <lineage>
        <taxon>Eukaryota</taxon>
        <taxon>Viridiplantae</taxon>
        <taxon>Streptophyta</taxon>
        <taxon>Embryophyta</taxon>
        <taxon>Tracheophyta</taxon>
        <taxon>Spermatophyta</taxon>
        <taxon>Magnoliopsida</taxon>
        <taxon>eudicotyledons</taxon>
        <taxon>Gunneridae</taxon>
        <taxon>Pentapetalae</taxon>
        <taxon>rosids</taxon>
        <taxon>malvids</taxon>
        <taxon>Brassicales</taxon>
        <taxon>Brassicaceae</taxon>
        <taxon>Camelineae</taxon>
        <taxon>Arabidopsis</taxon>
    </lineage>
</organism>
<accession>Q9LFT8</accession>
<sequence>MAMASFGQLNLEEPPPIWGSRSVDCFEKLEQIGEGTYGQVYMAKEIKTGEIVALKKIRMDNEREGFPITAIREIKILKKLHHENVIQLKEIVTSPGRDRDDQGKPDNNKYKGGIYMVFEYMDHDLTGLADRPGLRFTVPQIKCYMKQLLTGLHYCHVNQVLHRDIKGSNLLIDNEGNLKLADFGLARSYSHDHTGNLTNRVITLWYRPPELLLGATKYGPAIDMWSVGCIFAELLHAKPILPGKNEQEQLNKIFELCGSPDEKLWPGVSKMPWFNNFKPARPLKRRVREFFRHFDRHALELLEKMLVLDPAQRISAKDALDAEYFWTDPLPCDPKSLPTYESSHEFQTKKKRQQQRQNEEAAKRQKLQHPPLQHSRLPPLQHGGQSHAAPHWPAGPNHPTNNAPPQVPAGPSHNFYGKPRGPPGPNRYPPSGNQSGGYNQSRGGYSSGSYPPQGRGAPYVAGPRGPSGGPYGVGPPNYTQGGQYGGSGSSGRGQNQRNQQYGWQQ</sequence>
<keyword id="KW-0067">ATP-binding</keyword>
<keyword id="KW-0418">Kinase</keyword>
<keyword id="KW-0547">Nucleotide-binding</keyword>
<keyword id="KW-0597">Phosphoprotein</keyword>
<keyword id="KW-1185">Reference proteome</keyword>
<keyword id="KW-0723">Serine/threonine-protein kinase</keyword>
<keyword id="KW-0808">Transferase</keyword>
<reference key="1">
    <citation type="journal article" date="2000" name="Nature">
        <title>Sequence and analysis of chromosome 5 of the plant Arabidopsis thaliana.</title>
        <authorList>
            <person name="Tabata S."/>
            <person name="Kaneko T."/>
            <person name="Nakamura Y."/>
            <person name="Kotani H."/>
            <person name="Kato T."/>
            <person name="Asamizu E."/>
            <person name="Miyajima N."/>
            <person name="Sasamoto S."/>
            <person name="Kimura T."/>
            <person name="Hosouchi T."/>
            <person name="Kawashima K."/>
            <person name="Kohara M."/>
            <person name="Matsumoto M."/>
            <person name="Matsuno A."/>
            <person name="Muraki A."/>
            <person name="Nakayama S."/>
            <person name="Nakazaki N."/>
            <person name="Naruo K."/>
            <person name="Okumura S."/>
            <person name="Shinpo S."/>
            <person name="Takeuchi C."/>
            <person name="Wada T."/>
            <person name="Watanabe A."/>
            <person name="Yamada M."/>
            <person name="Yasuda M."/>
            <person name="Sato S."/>
            <person name="de la Bastide M."/>
            <person name="Huang E."/>
            <person name="Spiegel L."/>
            <person name="Gnoj L."/>
            <person name="O'Shaughnessy A."/>
            <person name="Preston R."/>
            <person name="Habermann K."/>
            <person name="Murray J."/>
            <person name="Johnson D."/>
            <person name="Rohlfing T."/>
            <person name="Nelson J."/>
            <person name="Stoneking T."/>
            <person name="Pepin K."/>
            <person name="Spieth J."/>
            <person name="Sekhon M."/>
            <person name="Armstrong J."/>
            <person name="Becker M."/>
            <person name="Belter E."/>
            <person name="Cordum H."/>
            <person name="Cordes M."/>
            <person name="Courtney L."/>
            <person name="Courtney W."/>
            <person name="Dante M."/>
            <person name="Du H."/>
            <person name="Edwards J."/>
            <person name="Fryman J."/>
            <person name="Haakensen B."/>
            <person name="Lamar E."/>
            <person name="Latreille P."/>
            <person name="Leonard S."/>
            <person name="Meyer R."/>
            <person name="Mulvaney E."/>
            <person name="Ozersky P."/>
            <person name="Riley A."/>
            <person name="Strowmatt C."/>
            <person name="Wagner-McPherson C."/>
            <person name="Wollam A."/>
            <person name="Yoakum M."/>
            <person name="Bell M."/>
            <person name="Dedhia N."/>
            <person name="Parnell L."/>
            <person name="Shah R."/>
            <person name="Rodriguez M."/>
            <person name="Hoon See L."/>
            <person name="Vil D."/>
            <person name="Baker J."/>
            <person name="Kirchoff K."/>
            <person name="Toth K."/>
            <person name="King L."/>
            <person name="Bahret A."/>
            <person name="Miller B."/>
            <person name="Marra M.A."/>
            <person name="Martienssen R."/>
            <person name="McCombie W.R."/>
            <person name="Wilson R.K."/>
            <person name="Murphy G."/>
            <person name="Bancroft I."/>
            <person name="Volckaert G."/>
            <person name="Wambutt R."/>
            <person name="Duesterhoeft A."/>
            <person name="Stiekema W."/>
            <person name="Pohl T."/>
            <person name="Entian K.-D."/>
            <person name="Terryn N."/>
            <person name="Hartley N."/>
            <person name="Bent E."/>
            <person name="Johnson S."/>
            <person name="Langham S.-A."/>
            <person name="McCullagh B."/>
            <person name="Robben J."/>
            <person name="Grymonprez B."/>
            <person name="Zimmermann W."/>
            <person name="Ramsperger U."/>
            <person name="Wedler H."/>
            <person name="Balke K."/>
            <person name="Wedler E."/>
            <person name="Peters S."/>
            <person name="van Staveren M."/>
            <person name="Dirkse W."/>
            <person name="Mooijman P."/>
            <person name="Klein Lankhorst R."/>
            <person name="Weitzenegger T."/>
            <person name="Bothe G."/>
            <person name="Rose M."/>
            <person name="Hauf J."/>
            <person name="Berneiser S."/>
            <person name="Hempel S."/>
            <person name="Feldpausch M."/>
            <person name="Lamberth S."/>
            <person name="Villarroel R."/>
            <person name="Gielen J."/>
            <person name="Ardiles W."/>
            <person name="Bents O."/>
            <person name="Lemcke K."/>
            <person name="Kolesov G."/>
            <person name="Mayer K.F.X."/>
            <person name="Rudd S."/>
            <person name="Schoof H."/>
            <person name="Schueller C."/>
            <person name="Zaccaria P."/>
            <person name="Mewes H.-W."/>
            <person name="Bevan M."/>
            <person name="Fransz P.F."/>
        </authorList>
    </citation>
    <scope>NUCLEOTIDE SEQUENCE [LARGE SCALE GENOMIC DNA]</scope>
    <source>
        <strain>cv. Columbia</strain>
    </source>
</reference>
<reference key="2">
    <citation type="journal article" date="2017" name="Plant J.">
        <title>Araport11: a complete reannotation of the Arabidopsis thaliana reference genome.</title>
        <authorList>
            <person name="Cheng C.Y."/>
            <person name="Krishnakumar V."/>
            <person name="Chan A.P."/>
            <person name="Thibaud-Nissen F."/>
            <person name="Schobel S."/>
            <person name="Town C.D."/>
        </authorList>
    </citation>
    <scope>GENOME REANNOTATION</scope>
    <source>
        <strain>cv. Columbia</strain>
    </source>
</reference>
<reference key="3">
    <citation type="journal article" date="2003" name="Science">
        <title>Empirical analysis of transcriptional activity in the Arabidopsis genome.</title>
        <authorList>
            <person name="Yamada K."/>
            <person name="Lim J."/>
            <person name="Dale J.M."/>
            <person name="Chen H."/>
            <person name="Shinn P."/>
            <person name="Palm C.J."/>
            <person name="Southwick A.M."/>
            <person name="Wu H.C."/>
            <person name="Kim C.J."/>
            <person name="Nguyen M."/>
            <person name="Pham P.K."/>
            <person name="Cheuk R.F."/>
            <person name="Karlin-Newmann G."/>
            <person name="Liu S.X."/>
            <person name="Lam B."/>
            <person name="Sakano H."/>
            <person name="Wu T."/>
            <person name="Yu G."/>
            <person name="Miranda M."/>
            <person name="Quach H.L."/>
            <person name="Tripp M."/>
            <person name="Chang C.H."/>
            <person name="Lee J.M."/>
            <person name="Toriumi M.J."/>
            <person name="Chan M.M."/>
            <person name="Tang C.C."/>
            <person name="Onodera C.S."/>
            <person name="Deng J.M."/>
            <person name="Akiyama K."/>
            <person name="Ansari Y."/>
            <person name="Arakawa T."/>
            <person name="Banh J."/>
            <person name="Banno F."/>
            <person name="Bowser L."/>
            <person name="Brooks S.Y."/>
            <person name="Carninci P."/>
            <person name="Chao Q."/>
            <person name="Choy N."/>
            <person name="Enju A."/>
            <person name="Goldsmith A.D."/>
            <person name="Gurjal M."/>
            <person name="Hansen N.F."/>
            <person name="Hayashizaki Y."/>
            <person name="Johnson-Hopson C."/>
            <person name="Hsuan V.W."/>
            <person name="Iida K."/>
            <person name="Karnes M."/>
            <person name="Khan S."/>
            <person name="Koesema E."/>
            <person name="Ishida J."/>
            <person name="Jiang P.X."/>
            <person name="Jones T."/>
            <person name="Kawai J."/>
            <person name="Kamiya A."/>
            <person name="Meyers C."/>
            <person name="Nakajima M."/>
            <person name="Narusaka M."/>
            <person name="Seki M."/>
            <person name="Sakurai T."/>
            <person name="Satou M."/>
            <person name="Tamse R."/>
            <person name="Vaysberg M."/>
            <person name="Wallender E.K."/>
            <person name="Wong C."/>
            <person name="Yamamura Y."/>
            <person name="Yuan S."/>
            <person name="Shinozaki K."/>
            <person name="Davis R.W."/>
            <person name="Theologis A."/>
            <person name="Ecker J.R."/>
        </authorList>
    </citation>
    <scope>NUCLEOTIDE SEQUENCE [LARGE SCALE MRNA]</scope>
    <source>
        <strain>cv. Columbia</strain>
    </source>
</reference>
<reference key="4">
    <citation type="journal article" date="2002" name="Plant Cell">
        <title>Genome-wide analysis of core cell cycle genes in Arabidopsis.</title>
        <authorList>
            <person name="Vandepoele K."/>
            <person name="Raes J."/>
            <person name="de Veylder L."/>
            <person name="Rouze P."/>
            <person name="Rombauts S."/>
            <person name="Inze D."/>
        </authorList>
    </citation>
    <scope>GENE FAMILY</scope>
    <scope>NOMENCLATURE</scope>
</reference>
<reference key="5">
    <citation type="journal article" date="2003" name="Cell. Mol. Life Sci.">
        <title>Novel complexes of cyclin-dependent kinases and a cyclin-like protein from Arabidopsis thaliana with a function unrelated to cell division.</title>
        <authorList>
            <person name="Barroco R.M."/>
            <person name="de Veylder L."/>
            <person name="Magyar Z."/>
            <person name="Engler G."/>
            <person name="Inze D."/>
            <person name="Mironov V."/>
        </authorList>
    </citation>
    <scope>TISSUE SPECIFICITY</scope>
    <scope>INTERACTION WITH CYCT1-3</scope>
</reference>
<reference key="6">
    <citation type="journal article" date="2006" name="Annu. Rev. Genet.">
        <title>Cell cycle regulation in plant development.</title>
        <authorList>
            <person name="Inze D."/>
            <person name="de Veylder L."/>
        </authorList>
    </citation>
    <scope>REVIEW</scope>
</reference>
<evidence type="ECO:0000250" key="1">
    <source>
        <dbReference type="UniProtKB" id="P24100"/>
    </source>
</evidence>
<evidence type="ECO:0000250" key="2">
    <source>
        <dbReference type="UniProtKB" id="Q9C9M7"/>
    </source>
</evidence>
<evidence type="ECO:0000255" key="3">
    <source>
        <dbReference type="PROSITE-ProRule" id="PRU00159"/>
    </source>
</evidence>
<evidence type="ECO:0000255" key="4">
    <source>
        <dbReference type="PROSITE-ProRule" id="PRU10027"/>
    </source>
</evidence>
<evidence type="ECO:0000256" key="5">
    <source>
        <dbReference type="SAM" id="MobiDB-lite"/>
    </source>
</evidence>
<evidence type="ECO:0000269" key="6">
    <source>
    </source>
</evidence>
<evidence type="ECO:0000305" key="7"/>
<dbReference type="EC" id="2.7.11.22"/>
<dbReference type="EC" id="2.7.11.23"/>
<dbReference type="EMBL" id="AL360334">
    <property type="protein sequence ID" value="CAB96683.1"/>
    <property type="molecule type" value="Genomic_DNA"/>
</dbReference>
<dbReference type="EMBL" id="CP002688">
    <property type="protein sequence ID" value="AED91515.1"/>
    <property type="molecule type" value="Genomic_DNA"/>
</dbReference>
<dbReference type="EMBL" id="AF375437">
    <property type="protein sequence ID" value="AAK53021.1"/>
    <property type="molecule type" value="mRNA"/>
</dbReference>
<dbReference type="EMBL" id="AY120690">
    <property type="protein sequence ID" value="AAM52233.1"/>
    <property type="molecule type" value="mRNA"/>
</dbReference>
<dbReference type="PIR" id="T50815">
    <property type="entry name" value="T50815"/>
</dbReference>
<dbReference type="SMR" id="Q9LFT8"/>
<dbReference type="BioGRID" id="16169">
    <property type="interactions" value="16"/>
</dbReference>
<dbReference type="FunCoup" id="Q9LFT8">
    <property type="interactions" value="4790"/>
</dbReference>
<dbReference type="IntAct" id="Q9LFT8">
    <property type="interactions" value="12"/>
</dbReference>
<dbReference type="STRING" id="3702.Q9LFT8"/>
<dbReference type="iPTMnet" id="Q9LFT8"/>
<dbReference type="PaxDb" id="3702-AT5G10270.1"/>
<dbReference type="ProteomicsDB" id="224391"/>
<dbReference type="EnsemblPlants" id="AT5G10270.1">
    <property type="protein sequence ID" value="AT5G10270.1"/>
    <property type="gene ID" value="AT5G10270"/>
</dbReference>
<dbReference type="GeneID" id="830891"/>
<dbReference type="Gramene" id="AT5G10270.1">
    <property type="protein sequence ID" value="AT5G10270.1"/>
    <property type="gene ID" value="AT5G10270"/>
</dbReference>
<dbReference type="KEGG" id="ath:AT5G10270"/>
<dbReference type="Araport" id="AT5G10270"/>
<dbReference type="TAIR" id="AT5G10270">
    <property type="gene designation" value="CDKC"/>
</dbReference>
<dbReference type="eggNOG" id="KOG0600">
    <property type="taxonomic scope" value="Eukaryota"/>
</dbReference>
<dbReference type="HOGENOM" id="CLU_000288_181_1_1"/>
<dbReference type="InParanoid" id="Q9LFT8"/>
<dbReference type="OMA" id="YTQGGQY"/>
<dbReference type="OrthoDB" id="28397at2759"/>
<dbReference type="PhylomeDB" id="Q9LFT8"/>
<dbReference type="PRO" id="PR:Q9LFT8"/>
<dbReference type="Proteomes" id="UP000006548">
    <property type="component" value="Chromosome 5"/>
</dbReference>
<dbReference type="ExpressionAtlas" id="Q9LFT8">
    <property type="expression patterns" value="baseline and differential"/>
</dbReference>
<dbReference type="GO" id="GO:0005524">
    <property type="term" value="F:ATP binding"/>
    <property type="evidence" value="ECO:0007669"/>
    <property type="project" value="UniProtKB-KW"/>
</dbReference>
<dbReference type="GO" id="GO:0004693">
    <property type="term" value="F:cyclin-dependent protein serine/threonine kinase activity"/>
    <property type="evidence" value="ECO:0007669"/>
    <property type="project" value="UniProtKB-EC"/>
</dbReference>
<dbReference type="GO" id="GO:0016301">
    <property type="term" value="F:kinase activity"/>
    <property type="evidence" value="ECO:0000314"/>
    <property type="project" value="TAIR"/>
</dbReference>
<dbReference type="GO" id="GO:0106310">
    <property type="term" value="F:protein serine kinase activity"/>
    <property type="evidence" value="ECO:0007669"/>
    <property type="project" value="RHEA"/>
</dbReference>
<dbReference type="GO" id="GO:0008353">
    <property type="term" value="F:RNA polymerase II CTD heptapeptide repeat kinase activity"/>
    <property type="evidence" value="ECO:0007669"/>
    <property type="project" value="UniProtKB-EC"/>
</dbReference>
<dbReference type="GO" id="GO:0009615">
    <property type="term" value="P:response to virus"/>
    <property type="evidence" value="ECO:0000270"/>
    <property type="project" value="TAIR"/>
</dbReference>
<dbReference type="CDD" id="cd07840">
    <property type="entry name" value="STKc_CDK9_like"/>
    <property type="match status" value="1"/>
</dbReference>
<dbReference type="FunFam" id="1.10.510.10:FF:000273">
    <property type="entry name" value="Cyclin-dependent kinase C-2"/>
    <property type="match status" value="1"/>
</dbReference>
<dbReference type="FunFam" id="3.30.200.20:FF:000272">
    <property type="entry name" value="Cyclin-dependent kinase C-2"/>
    <property type="match status" value="1"/>
</dbReference>
<dbReference type="Gene3D" id="3.30.200.20">
    <property type="entry name" value="Phosphorylase Kinase, domain 1"/>
    <property type="match status" value="1"/>
</dbReference>
<dbReference type="Gene3D" id="1.10.510.10">
    <property type="entry name" value="Transferase(Phosphotransferase) domain 1"/>
    <property type="match status" value="1"/>
</dbReference>
<dbReference type="InterPro" id="IPR050108">
    <property type="entry name" value="CDK"/>
</dbReference>
<dbReference type="InterPro" id="IPR011009">
    <property type="entry name" value="Kinase-like_dom_sf"/>
</dbReference>
<dbReference type="InterPro" id="IPR000719">
    <property type="entry name" value="Prot_kinase_dom"/>
</dbReference>
<dbReference type="InterPro" id="IPR017441">
    <property type="entry name" value="Protein_kinase_ATP_BS"/>
</dbReference>
<dbReference type="InterPro" id="IPR008271">
    <property type="entry name" value="Ser/Thr_kinase_AS"/>
</dbReference>
<dbReference type="PANTHER" id="PTHR24056">
    <property type="entry name" value="CELL DIVISION PROTEIN KINASE"/>
    <property type="match status" value="1"/>
</dbReference>
<dbReference type="PANTHER" id="PTHR24056:SF546">
    <property type="entry name" value="CYCLIN-DEPENDENT KINASE 12"/>
    <property type="match status" value="1"/>
</dbReference>
<dbReference type="Pfam" id="PF00069">
    <property type="entry name" value="Pkinase"/>
    <property type="match status" value="1"/>
</dbReference>
<dbReference type="SMART" id="SM00220">
    <property type="entry name" value="S_TKc"/>
    <property type="match status" value="1"/>
</dbReference>
<dbReference type="SUPFAM" id="SSF56112">
    <property type="entry name" value="Protein kinase-like (PK-like)"/>
    <property type="match status" value="1"/>
</dbReference>
<dbReference type="PROSITE" id="PS00107">
    <property type="entry name" value="PROTEIN_KINASE_ATP"/>
    <property type="match status" value="1"/>
</dbReference>
<dbReference type="PROSITE" id="PS50011">
    <property type="entry name" value="PROTEIN_KINASE_DOM"/>
    <property type="match status" value="1"/>
</dbReference>
<dbReference type="PROSITE" id="PS00108">
    <property type="entry name" value="PROTEIN_KINASE_ST"/>
    <property type="match status" value="1"/>
</dbReference>
<feature type="chain" id="PRO_0000293117" description="Cyclin-dependent kinase C-1">
    <location>
        <begin position="1"/>
        <end position="505"/>
    </location>
</feature>
<feature type="domain" description="Protein kinase" evidence="3">
    <location>
        <begin position="26"/>
        <end position="325"/>
    </location>
</feature>
<feature type="region of interest" description="Disordered" evidence="5">
    <location>
        <begin position="336"/>
        <end position="505"/>
    </location>
</feature>
<feature type="compositionally biased region" description="Low complexity" evidence="5">
    <location>
        <begin position="429"/>
        <end position="456"/>
    </location>
</feature>
<feature type="compositionally biased region" description="Gly residues" evidence="5">
    <location>
        <begin position="482"/>
        <end position="491"/>
    </location>
</feature>
<feature type="compositionally biased region" description="Low complexity" evidence="5">
    <location>
        <begin position="492"/>
        <end position="505"/>
    </location>
</feature>
<feature type="active site" description="Proton acceptor" evidence="3 4">
    <location>
        <position position="164"/>
    </location>
</feature>
<feature type="binding site" evidence="3">
    <location>
        <begin position="32"/>
        <end position="40"/>
    </location>
    <ligand>
        <name>ATP</name>
        <dbReference type="ChEBI" id="CHEBI:30616"/>
    </ligand>
</feature>
<feature type="binding site" evidence="3">
    <location>
        <position position="55"/>
    </location>
    <ligand>
        <name>ATP</name>
        <dbReference type="ChEBI" id="CHEBI:30616"/>
    </ligand>
</feature>
<feature type="modified residue" description="Phosphotyrosine" evidence="1">
    <location>
        <position position="37"/>
    </location>
</feature>
<feature type="modified residue" description="Phosphothreonine" evidence="2">
    <location>
        <position position="198"/>
    </location>
</feature>
<name>CDKC1_ARATH</name>
<gene>
    <name type="primary">CDKC-1</name>
    <name type="ordered locus">At5g10270</name>
    <name type="ORF">F18D22.40</name>
</gene>